<evidence type="ECO:0000255" key="1">
    <source>
        <dbReference type="HAMAP-Rule" id="MF_00156"/>
    </source>
</evidence>
<evidence type="ECO:0000256" key="2">
    <source>
        <dbReference type="SAM" id="MobiDB-lite"/>
    </source>
</evidence>
<accession>Q1GR07</accession>
<feature type="chain" id="PRO_0000297382" description="3-methyl-2-oxobutanoate hydroxymethyltransferase">
    <location>
        <begin position="1"/>
        <end position="287"/>
    </location>
</feature>
<feature type="region of interest" description="Disordered" evidence="2">
    <location>
        <begin position="1"/>
        <end position="24"/>
    </location>
</feature>
<feature type="compositionally biased region" description="Polar residues" evidence="2">
    <location>
        <begin position="1"/>
        <end position="19"/>
    </location>
</feature>
<feature type="active site" description="Proton acceptor" evidence="1">
    <location>
        <position position="204"/>
    </location>
</feature>
<feature type="binding site" evidence="1">
    <location>
        <begin position="66"/>
        <end position="67"/>
    </location>
    <ligand>
        <name>3-methyl-2-oxobutanoate</name>
        <dbReference type="ChEBI" id="CHEBI:11851"/>
    </ligand>
</feature>
<feature type="binding site" evidence="1">
    <location>
        <position position="66"/>
    </location>
    <ligand>
        <name>Mg(2+)</name>
        <dbReference type="ChEBI" id="CHEBI:18420"/>
    </ligand>
</feature>
<feature type="binding site" evidence="1">
    <location>
        <position position="105"/>
    </location>
    <ligand>
        <name>3-methyl-2-oxobutanoate</name>
        <dbReference type="ChEBI" id="CHEBI:11851"/>
    </ligand>
</feature>
<feature type="binding site" evidence="1">
    <location>
        <position position="105"/>
    </location>
    <ligand>
        <name>Mg(2+)</name>
        <dbReference type="ChEBI" id="CHEBI:18420"/>
    </ligand>
</feature>
<feature type="binding site" evidence="1">
    <location>
        <position position="135"/>
    </location>
    <ligand>
        <name>3-methyl-2-oxobutanoate</name>
        <dbReference type="ChEBI" id="CHEBI:11851"/>
    </ligand>
</feature>
<feature type="binding site" evidence="1">
    <location>
        <position position="137"/>
    </location>
    <ligand>
        <name>Mg(2+)</name>
        <dbReference type="ChEBI" id="CHEBI:18420"/>
    </ligand>
</feature>
<reference key="1">
    <citation type="journal article" date="2009" name="Proc. Natl. Acad. Sci. U.S.A.">
        <title>The genomic basis of trophic strategy in marine bacteria.</title>
        <authorList>
            <person name="Lauro F.M."/>
            <person name="McDougald D."/>
            <person name="Thomas T."/>
            <person name="Williams T.J."/>
            <person name="Egan S."/>
            <person name="Rice S."/>
            <person name="DeMaere M.Z."/>
            <person name="Ting L."/>
            <person name="Ertan H."/>
            <person name="Johnson J."/>
            <person name="Ferriera S."/>
            <person name="Lapidus A."/>
            <person name="Anderson I."/>
            <person name="Kyrpides N."/>
            <person name="Munk A.C."/>
            <person name="Detter C."/>
            <person name="Han C.S."/>
            <person name="Brown M.V."/>
            <person name="Robb F.T."/>
            <person name="Kjelleberg S."/>
            <person name="Cavicchioli R."/>
        </authorList>
    </citation>
    <scope>NUCLEOTIDE SEQUENCE [LARGE SCALE GENOMIC DNA]</scope>
    <source>
        <strain>DSM 13593 / LMG 18877 / RB2256</strain>
    </source>
</reference>
<organism>
    <name type="scientific">Sphingopyxis alaskensis (strain DSM 13593 / LMG 18877 / RB2256)</name>
    <name type="common">Sphingomonas alaskensis</name>
    <dbReference type="NCBI Taxonomy" id="317655"/>
    <lineage>
        <taxon>Bacteria</taxon>
        <taxon>Pseudomonadati</taxon>
        <taxon>Pseudomonadota</taxon>
        <taxon>Alphaproteobacteria</taxon>
        <taxon>Sphingomonadales</taxon>
        <taxon>Sphingomonadaceae</taxon>
        <taxon>Sphingopyxis</taxon>
    </lineage>
</organism>
<gene>
    <name evidence="1" type="primary">panB</name>
    <name type="ordered locus">Sala_2206</name>
</gene>
<protein>
    <recommendedName>
        <fullName evidence="1">3-methyl-2-oxobutanoate hydroxymethyltransferase</fullName>
        <ecNumber evidence="1">2.1.2.11</ecNumber>
    </recommendedName>
    <alternativeName>
        <fullName evidence="1">Ketopantoate hydroxymethyltransferase</fullName>
        <shortName evidence="1">KPHMT</shortName>
    </alternativeName>
</protein>
<sequence length="287" mass="30575">MSTLPKTLTLDTSTSRANPTPQPMKRLTVPRIRQRKGGEPIVMLTAYTVRMAQLLDPHCDMLLVGDSLAQVIYGLPHTVGVTMEMMALHGAAVVRGSYHAAVIVDMPFGSYEGSPQQAFDNAARLLKETGAAAVKVEGGKVLAPTIEFLTQRGIPVMGHVGLTPQAVNILGGYGVRGKSEEEARSIVEDAVAVAQAGAFSIVIEGVLESIAIEITNKVACPTIGIGASAQCDGQVLVTDDMLGMFERVPKFVKRYRDMAGVVSGAVQDYADEVRSRSFPTEDQIYAG</sequence>
<name>PANB_SPHAL</name>
<keyword id="KW-0963">Cytoplasm</keyword>
<keyword id="KW-0460">Magnesium</keyword>
<keyword id="KW-0479">Metal-binding</keyword>
<keyword id="KW-0566">Pantothenate biosynthesis</keyword>
<keyword id="KW-1185">Reference proteome</keyword>
<keyword id="KW-0808">Transferase</keyword>
<comment type="function">
    <text evidence="1">Catalyzes the reversible reaction in which hydroxymethyl group from 5,10-methylenetetrahydrofolate is transferred onto alpha-ketoisovalerate to form ketopantoate.</text>
</comment>
<comment type="catalytic activity">
    <reaction evidence="1">
        <text>3-methyl-2-oxobutanoate + (6R)-5,10-methylene-5,6,7,8-tetrahydrofolate + H2O = 2-dehydropantoate + (6S)-5,6,7,8-tetrahydrofolate</text>
        <dbReference type="Rhea" id="RHEA:11824"/>
        <dbReference type="ChEBI" id="CHEBI:11561"/>
        <dbReference type="ChEBI" id="CHEBI:11851"/>
        <dbReference type="ChEBI" id="CHEBI:15377"/>
        <dbReference type="ChEBI" id="CHEBI:15636"/>
        <dbReference type="ChEBI" id="CHEBI:57453"/>
        <dbReference type="EC" id="2.1.2.11"/>
    </reaction>
</comment>
<comment type="cofactor">
    <cofactor evidence="1">
        <name>Mg(2+)</name>
        <dbReference type="ChEBI" id="CHEBI:18420"/>
    </cofactor>
    <text evidence="1">Binds 1 Mg(2+) ion per subunit.</text>
</comment>
<comment type="pathway">
    <text evidence="1">Cofactor biosynthesis; (R)-pantothenate biosynthesis; (R)-pantoate from 3-methyl-2-oxobutanoate: step 1/2.</text>
</comment>
<comment type="subunit">
    <text evidence="1">Homodecamer; pentamer of dimers.</text>
</comment>
<comment type="subcellular location">
    <subcellularLocation>
        <location evidence="1">Cytoplasm</location>
    </subcellularLocation>
</comment>
<comment type="similarity">
    <text evidence="1">Belongs to the PanB family.</text>
</comment>
<proteinExistence type="inferred from homology"/>
<dbReference type="EC" id="2.1.2.11" evidence="1"/>
<dbReference type="EMBL" id="CP000356">
    <property type="protein sequence ID" value="ABF53915.1"/>
    <property type="molecule type" value="Genomic_DNA"/>
</dbReference>
<dbReference type="RefSeq" id="WP_011542491.1">
    <property type="nucleotide sequence ID" value="NC_008048.1"/>
</dbReference>
<dbReference type="SMR" id="Q1GR07"/>
<dbReference type="STRING" id="317655.Sala_2206"/>
<dbReference type="KEGG" id="sal:Sala_2206"/>
<dbReference type="eggNOG" id="COG0413">
    <property type="taxonomic scope" value="Bacteria"/>
</dbReference>
<dbReference type="HOGENOM" id="CLU_036645_1_0_5"/>
<dbReference type="OrthoDB" id="9781789at2"/>
<dbReference type="UniPathway" id="UPA00028">
    <property type="reaction ID" value="UER00003"/>
</dbReference>
<dbReference type="Proteomes" id="UP000006578">
    <property type="component" value="Chromosome"/>
</dbReference>
<dbReference type="GO" id="GO:0005737">
    <property type="term" value="C:cytoplasm"/>
    <property type="evidence" value="ECO:0007669"/>
    <property type="project" value="UniProtKB-SubCell"/>
</dbReference>
<dbReference type="GO" id="GO:0003864">
    <property type="term" value="F:3-methyl-2-oxobutanoate hydroxymethyltransferase activity"/>
    <property type="evidence" value="ECO:0007669"/>
    <property type="project" value="UniProtKB-UniRule"/>
</dbReference>
<dbReference type="GO" id="GO:0000287">
    <property type="term" value="F:magnesium ion binding"/>
    <property type="evidence" value="ECO:0007669"/>
    <property type="project" value="TreeGrafter"/>
</dbReference>
<dbReference type="GO" id="GO:0015940">
    <property type="term" value="P:pantothenate biosynthetic process"/>
    <property type="evidence" value="ECO:0007669"/>
    <property type="project" value="UniProtKB-UniRule"/>
</dbReference>
<dbReference type="CDD" id="cd06557">
    <property type="entry name" value="KPHMT-like"/>
    <property type="match status" value="1"/>
</dbReference>
<dbReference type="FunFam" id="3.20.20.60:FF:000003">
    <property type="entry name" value="3-methyl-2-oxobutanoate hydroxymethyltransferase"/>
    <property type="match status" value="1"/>
</dbReference>
<dbReference type="Gene3D" id="3.20.20.60">
    <property type="entry name" value="Phosphoenolpyruvate-binding domains"/>
    <property type="match status" value="1"/>
</dbReference>
<dbReference type="HAMAP" id="MF_00156">
    <property type="entry name" value="PanB"/>
    <property type="match status" value="1"/>
</dbReference>
<dbReference type="InterPro" id="IPR003700">
    <property type="entry name" value="Pantoate_hydroxy_MeTrfase"/>
</dbReference>
<dbReference type="InterPro" id="IPR015813">
    <property type="entry name" value="Pyrv/PenolPyrv_kinase-like_dom"/>
</dbReference>
<dbReference type="InterPro" id="IPR040442">
    <property type="entry name" value="Pyrv_kinase-like_dom_sf"/>
</dbReference>
<dbReference type="NCBIfam" id="TIGR00222">
    <property type="entry name" value="panB"/>
    <property type="match status" value="1"/>
</dbReference>
<dbReference type="NCBIfam" id="NF001452">
    <property type="entry name" value="PRK00311.1"/>
    <property type="match status" value="1"/>
</dbReference>
<dbReference type="PANTHER" id="PTHR20881">
    <property type="entry name" value="3-METHYL-2-OXOBUTANOATE HYDROXYMETHYLTRANSFERASE"/>
    <property type="match status" value="1"/>
</dbReference>
<dbReference type="PANTHER" id="PTHR20881:SF0">
    <property type="entry name" value="3-METHYL-2-OXOBUTANOATE HYDROXYMETHYLTRANSFERASE"/>
    <property type="match status" value="1"/>
</dbReference>
<dbReference type="Pfam" id="PF02548">
    <property type="entry name" value="Pantoate_transf"/>
    <property type="match status" value="1"/>
</dbReference>
<dbReference type="PIRSF" id="PIRSF000388">
    <property type="entry name" value="Pantoate_hydroxy_MeTrfase"/>
    <property type="match status" value="1"/>
</dbReference>
<dbReference type="SUPFAM" id="SSF51621">
    <property type="entry name" value="Phosphoenolpyruvate/pyruvate domain"/>
    <property type="match status" value="1"/>
</dbReference>